<evidence type="ECO:0000255" key="1">
    <source>
        <dbReference type="HAMAP-Rule" id="MF_01225"/>
    </source>
</evidence>
<evidence type="ECO:0000255" key="2">
    <source>
        <dbReference type="PROSITE-ProRule" id="PRU01266"/>
    </source>
</evidence>
<keyword id="KW-0004">4Fe-4S</keyword>
<keyword id="KW-0342">GTP-binding</keyword>
<keyword id="KW-0408">Iron</keyword>
<keyword id="KW-0411">Iron-sulfur</keyword>
<keyword id="KW-0456">Lyase</keyword>
<keyword id="KW-0479">Metal-binding</keyword>
<keyword id="KW-0501">Molybdenum cofactor biosynthesis</keyword>
<keyword id="KW-0547">Nucleotide-binding</keyword>
<keyword id="KW-0949">S-adenosyl-L-methionine</keyword>
<reference key="1">
    <citation type="submission" date="2002-12" db="EMBL/GenBank/DDBJ databases">
        <title>Complete genome sequence of Vibrio vulnificus CMCP6.</title>
        <authorList>
            <person name="Rhee J.H."/>
            <person name="Kim S.Y."/>
            <person name="Chung S.S."/>
            <person name="Kim J.J."/>
            <person name="Moon Y.H."/>
            <person name="Jeong H."/>
            <person name="Choy H.E."/>
        </authorList>
    </citation>
    <scope>NUCLEOTIDE SEQUENCE [LARGE SCALE GENOMIC DNA]</scope>
    <source>
        <strain>CMCP6</strain>
    </source>
</reference>
<comment type="function">
    <text evidence="1">Catalyzes the cyclization of GTP to (8S)-3',8-cyclo-7,8-dihydroguanosine 5'-triphosphate.</text>
</comment>
<comment type="catalytic activity">
    <reaction evidence="1">
        <text>GTP + AH2 + S-adenosyl-L-methionine = (8S)-3',8-cyclo-7,8-dihydroguanosine 5'-triphosphate + 5'-deoxyadenosine + L-methionine + A + H(+)</text>
        <dbReference type="Rhea" id="RHEA:49576"/>
        <dbReference type="ChEBI" id="CHEBI:13193"/>
        <dbReference type="ChEBI" id="CHEBI:15378"/>
        <dbReference type="ChEBI" id="CHEBI:17319"/>
        <dbReference type="ChEBI" id="CHEBI:17499"/>
        <dbReference type="ChEBI" id="CHEBI:37565"/>
        <dbReference type="ChEBI" id="CHEBI:57844"/>
        <dbReference type="ChEBI" id="CHEBI:59789"/>
        <dbReference type="ChEBI" id="CHEBI:131766"/>
        <dbReference type="EC" id="4.1.99.22"/>
    </reaction>
</comment>
<comment type="cofactor">
    <cofactor evidence="1">
        <name>[4Fe-4S] cluster</name>
        <dbReference type="ChEBI" id="CHEBI:49883"/>
    </cofactor>
    <text evidence="1">Binds 2 [4Fe-4S] clusters. Binds 1 [4Fe-4S] cluster coordinated with 3 cysteines and an exchangeable S-adenosyl-L-methionine and 1 [4Fe-4S] cluster coordinated with 3 cysteines and the GTP-derived substrate.</text>
</comment>
<comment type="pathway">
    <text evidence="1">Cofactor biosynthesis; molybdopterin biosynthesis.</text>
</comment>
<comment type="subunit">
    <text evidence="1">Monomer and homodimer.</text>
</comment>
<comment type="similarity">
    <text evidence="1">Belongs to the radical SAM superfamily. MoaA family.</text>
</comment>
<sequence>MERCSVAQQFEDRFHRKFYYLRLSVTDVCNFKCTYCLPDGYQPSGQKNSSFLNLSEIRRVVKAFADCGTSKVRITGGEPSLRKDFTDIIHTVASTQGIKRVATTTNGYRMEKHIGEWKEAGLNQINVSVDSLDPRMFHQITGENKFHQVMSGIDRAFEVGFEQVKVNVVLMKDLNHNELPAFLHWIKHRPIQLRFIELMQTGEMDTLFQQHHVSGVAIRNHLIANGWLLKVKAANDGPAQVFVHPDYQGEIGLIMPYEKDFCASCNRLRVSAKGKLHLCLFGDRGVELRDLLQQDDQESDLIARIQSELQTKSVSHFLNEGQTGMTPHLASIGG</sequence>
<name>MOAA_VIBVU</name>
<protein>
    <recommendedName>
        <fullName evidence="1">GTP 3',8-cyclase</fullName>
        <ecNumber evidence="1">4.1.99.22</ecNumber>
    </recommendedName>
    <alternativeName>
        <fullName evidence="1">Molybdenum cofactor biosynthesis protein A</fullName>
    </alternativeName>
</protein>
<proteinExistence type="inferred from homology"/>
<organism>
    <name type="scientific">Vibrio vulnificus (strain CMCP6)</name>
    <dbReference type="NCBI Taxonomy" id="216895"/>
    <lineage>
        <taxon>Bacteria</taxon>
        <taxon>Pseudomonadati</taxon>
        <taxon>Pseudomonadota</taxon>
        <taxon>Gammaproteobacteria</taxon>
        <taxon>Vibrionales</taxon>
        <taxon>Vibrionaceae</taxon>
        <taxon>Vibrio</taxon>
    </lineage>
</organism>
<dbReference type="EC" id="4.1.99.22" evidence="1"/>
<dbReference type="EMBL" id="AE016795">
    <property type="protein sequence ID" value="AAO11411.2"/>
    <property type="molecule type" value="Genomic_DNA"/>
</dbReference>
<dbReference type="SMR" id="Q8D894"/>
<dbReference type="KEGG" id="vvu:VV1_3088"/>
<dbReference type="HOGENOM" id="CLU_009273_0_1_6"/>
<dbReference type="UniPathway" id="UPA00344"/>
<dbReference type="Proteomes" id="UP000002275">
    <property type="component" value="Chromosome 1"/>
</dbReference>
<dbReference type="GO" id="GO:0051539">
    <property type="term" value="F:4 iron, 4 sulfur cluster binding"/>
    <property type="evidence" value="ECO:0007669"/>
    <property type="project" value="UniProtKB-UniRule"/>
</dbReference>
<dbReference type="GO" id="GO:0061799">
    <property type="term" value="F:cyclic pyranopterin monophosphate synthase activity"/>
    <property type="evidence" value="ECO:0007669"/>
    <property type="project" value="TreeGrafter"/>
</dbReference>
<dbReference type="GO" id="GO:0061798">
    <property type="term" value="F:GTP 3',8'-cyclase activity"/>
    <property type="evidence" value="ECO:0007669"/>
    <property type="project" value="UniProtKB-UniRule"/>
</dbReference>
<dbReference type="GO" id="GO:0005525">
    <property type="term" value="F:GTP binding"/>
    <property type="evidence" value="ECO:0007669"/>
    <property type="project" value="UniProtKB-UniRule"/>
</dbReference>
<dbReference type="GO" id="GO:0046872">
    <property type="term" value="F:metal ion binding"/>
    <property type="evidence" value="ECO:0007669"/>
    <property type="project" value="UniProtKB-KW"/>
</dbReference>
<dbReference type="GO" id="GO:1904047">
    <property type="term" value="F:S-adenosyl-L-methionine binding"/>
    <property type="evidence" value="ECO:0007669"/>
    <property type="project" value="UniProtKB-UniRule"/>
</dbReference>
<dbReference type="GO" id="GO:0006777">
    <property type="term" value="P:Mo-molybdopterin cofactor biosynthetic process"/>
    <property type="evidence" value="ECO:0007669"/>
    <property type="project" value="UniProtKB-UniRule"/>
</dbReference>
<dbReference type="CDD" id="cd01335">
    <property type="entry name" value="Radical_SAM"/>
    <property type="match status" value="1"/>
</dbReference>
<dbReference type="CDD" id="cd21117">
    <property type="entry name" value="Twitch_MoaA"/>
    <property type="match status" value="1"/>
</dbReference>
<dbReference type="FunFam" id="3.20.20.70:FF:000057">
    <property type="entry name" value="GTP 3',8-cyclase"/>
    <property type="match status" value="1"/>
</dbReference>
<dbReference type="Gene3D" id="3.20.20.70">
    <property type="entry name" value="Aldolase class I"/>
    <property type="match status" value="1"/>
</dbReference>
<dbReference type="HAMAP" id="MF_01225_B">
    <property type="entry name" value="MoaA_B"/>
    <property type="match status" value="1"/>
</dbReference>
<dbReference type="InterPro" id="IPR013785">
    <property type="entry name" value="Aldolase_TIM"/>
</dbReference>
<dbReference type="InterPro" id="IPR006638">
    <property type="entry name" value="Elp3/MiaA/NifB-like_rSAM"/>
</dbReference>
<dbReference type="InterPro" id="IPR013483">
    <property type="entry name" value="MoaA"/>
</dbReference>
<dbReference type="InterPro" id="IPR010505">
    <property type="entry name" value="MoaA_twitch"/>
</dbReference>
<dbReference type="InterPro" id="IPR050105">
    <property type="entry name" value="MoCo_biosynth_MoaA/MoaC"/>
</dbReference>
<dbReference type="InterPro" id="IPR007197">
    <property type="entry name" value="rSAM"/>
</dbReference>
<dbReference type="NCBIfam" id="TIGR02666">
    <property type="entry name" value="moaA"/>
    <property type="match status" value="1"/>
</dbReference>
<dbReference type="PANTHER" id="PTHR22960:SF28">
    <property type="entry name" value="GTP 3',8-CYCLASE"/>
    <property type="match status" value="1"/>
</dbReference>
<dbReference type="PANTHER" id="PTHR22960">
    <property type="entry name" value="MOLYBDOPTERIN COFACTOR SYNTHESIS PROTEIN A"/>
    <property type="match status" value="1"/>
</dbReference>
<dbReference type="Pfam" id="PF13353">
    <property type="entry name" value="Fer4_12"/>
    <property type="match status" value="1"/>
</dbReference>
<dbReference type="Pfam" id="PF06463">
    <property type="entry name" value="Mob_synth_C"/>
    <property type="match status" value="1"/>
</dbReference>
<dbReference type="Pfam" id="PF04055">
    <property type="entry name" value="Radical_SAM"/>
    <property type="match status" value="1"/>
</dbReference>
<dbReference type="SFLD" id="SFLDG01383">
    <property type="entry name" value="cyclic_pyranopterin_phosphate"/>
    <property type="match status" value="1"/>
</dbReference>
<dbReference type="SFLD" id="SFLDG01072">
    <property type="entry name" value="dehydrogenase_like"/>
    <property type="match status" value="1"/>
</dbReference>
<dbReference type="SMART" id="SM00729">
    <property type="entry name" value="Elp3"/>
    <property type="match status" value="1"/>
</dbReference>
<dbReference type="SUPFAM" id="SSF102114">
    <property type="entry name" value="Radical SAM enzymes"/>
    <property type="match status" value="1"/>
</dbReference>
<dbReference type="PROSITE" id="PS51918">
    <property type="entry name" value="RADICAL_SAM"/>
    <property type="match status" value="1"/>
</dbReference>
<gene>
    <name evidence="1" type="primary">moaA</name>
    <name type="ordered locus">VV1_3088</name>
</gene>
<feature type="chain" id="PRO_0000153008" description="GTP 3',8-cyclase">
    <location>
        <begin position="1"/>
        <end position="334"/>
    </location>
</feature>
<feature type="domain" description="Radical SAM core" evidence="2">
    <location>
        <begin position="13"/>
        <end position="239"/>
    </location>
</feature>
<feature type="binding site" evidence="1">
    <location>
        <position position="22"/>
    </location>
    <ligand>
        <name>GTP</name>
        <dbReference type="ChEBI" id="CHEBI:37565"/>
    </ligand>
</feature>
<feature type="binding site" evidence="1">
    <location>
        <position position="29"/>
    </location>
    <ligand>
        <name>[4Fe-4S] cluster</name>
        <dbReference type="ChEBI" id="CHEBI:49883"/>
        <label>1</label>
        <note>4Fe-4S-S-AdoMet</note>
    </ligand>
</feature>
<feature type="binding site" evidence="1">
    <location>
        <position position="33"/>
    </location>
    <ligand>
        <name>[4Fe-4S] cluster</name>
        <dbReference type="ChEBI" id="CHEBI:49883"/>
        <label>1</label>
        <note>4Fe-4S-S-AdoMet</note>
    </ligand>
</feature>
<feature type="binding site" evidence="1">
    <location>
        <position position="35"/>
    </location>
    <ligand>
        <name>S-adenosyl-L-methionine</name>
        <dbReference type="ChEBI" id="CHEBI:59789"/>
    </ligand>
</feature>
<feature type="binding site" evidence="1">
    <location>
        <position position="36"/>
    </location>
    <ligand>
        <name>[4Fe-4S] cluster</name>
        <dbReference type="ChEBI" id="CHEBI:49883"/>
        <label>1</label>
        <note>4Fe-4S-S-AdoMet</note>
    </ligand>
</feature>
<feature type="binding site" evidence="1">
    <location>
        <position position="73"/>
    </location>
    <ligand>
        <name>GTP</name>
        <dbReference type="ChEBI" id="CHEBI:37565"/>
    </ligand>
</feature>
<feature type="binding site" evidence="1">
    <location>
        <position position="77"/>
    </location>
    <ligand>
        <name>S-adenosyl-L-methionine</name>
        <dbReference type="ChEBI" id="CHEBI:59789"/>
    </ligand>
</feature>
<feature type="binding site" evidence="1">
    <location>
        <position position="104"/>
    </location>
    <ligand>
        <name>GTP</name>
        <dbReference type="ChEBI" id="CHEBI:37565"/>
    </ligand>
</feature>
<feature type="binding site" evidence="1">
    <location>
        <position position="128"/>
    </location>
    <ligand>
        <name>S-adenosyl-L-methionine</name>
        <dbReference type="ChEBI" id="CHEBI:59789"/>
    </ligand>
</feature>
<feature type="binding site" evidence="1">
    <location>
        <position position="165"/>
    </location>
    <ligand>
        <name>GTP</name>
        <dbReference type="ChEBI" id="CHEBI:37565"/>
    </ligand>
</feature>
<feature type="binding site" evidence="1">
    <location>
        <position position="199"/>
    </location>
    <ligand>
        <name>S-adenosyl-L-methionine</name>
        <dbReference type="ChEBI" id="CHEBI:59789"/>
    </ligand>
</feature>
<feature type="binding site" evidence="1">
    <location>
        <position position="262"/>
    </location>
    <ligand>
        <name>[4Fe-4S] cluster</name>
        <dbReference type="ChEBI" id="CHEBI:49883"/>
        <label>2</label>
        <note>4Fe-4S-substrate</note>
    </ligand>
</feature>
<feature type="binding site" evidence="1">
    <location>
        <position position="265"/>
    </location>
    <ligand>
        <name>[4Fe-4S] cluster</name>
        <dbReference type="ChEBI" id="CHEBI:49883"/>
        <label>2</label>
        <note>4Fe-4S-substrate</note>
    </ligand>
</feature>
<feature type="binding site" evidence="1">
    <location>
        <begin position="267"/>
        <end position="269"/>
    </location>
    <ligand>
        <name>GTP</name>
        <dbReference type="ChEBI" id="CHEBI:37565"/>
    </ligand>
</feature>
<feature type="binding site" evidence="1">
    <location>
        <position position="279"/>
    </location>
    <ligand>
        <name>[4Fe-4S] cluster</name>
        <dbReference type="ChEBI" id="CHEBI:49883"/>
        <label>2</label>
        <note>4Fe-4S-substrate</note>
    </ligand>
</feature>
<accession>Q8D894</accession>